<sequence length="317" mass="36599">MRVLWVALVVTLLAGCRTEDEPGPPPEVHVWWEESKWQGSQPWEQALGRFWDYLRWVQSLSDQVQEELLSTKVTQELTELIEESMKEVKAYREELEAQLGPVTQETQARLSKELQAAQARVGADMEDVRNRLVLYRSEVHNMLGQTTEELRSRLASHLRNVRKRLVRDTEDLQKRLAVYQAGLREGAERSVSALRERLGPLVEQGRLRAATLSTRAGQPLRERAEAWGQKLRGRLEEMGSRTRDRLDEMRDELEEVRTKVEEQGSQLRLQAEAFQARLKGWFEPLVEDMRRQWAGLVERMQSAVSISSSTSAPSDNQ</sequence>
<evidence type="ECO:0000250" key="1">
    <source>
        <dbReference type="UniProtKB" id="P02649"/>
    </source>
</evidence>
<evidence type="ECO:0000250" key="2">
    <source>
        <dbReference type="UniProtKB" id="P08226"/>
    </source>
</evidence>
<evidence type="ECO:0000269" key="3">
    <source>
    </source>
</evidence>
<evidence type="ECO:0000305" key="4"/>
<accession>P18650</accession>
<accession>O19099</accession>
<gene>
    <name type="primary">APOE</name>
</gene>
<proteinExistence type="evidence at protein level"/>
<comment type="function">
    <text evidence="1">APOE is an apolipoprotein, a protein associating with lipid particles, that mainly functions in lipoprotein-mediated lipid transport between organs via the plasma and interstitial fluids. APOE is a core component of plasma lipoproteins and is involved in their production, conversion and clearance. Apolipoproteins are amphipathic molecules that interact both with lipids of the lipoprotein particle core and the aqueous environment of the plasma. As such, APOE associates with chylomicrons, chylomicron remnants, very low density lipoproteins (VLDL) and intermediate density lipoproteins (IDL) but shows a preferential binding to high-density lipoproteins (HDL). It also binds a wide range of cellular receptors including the LDL receptor/LDLR and the very low-density lipoprotein receptor/VLDLR that mediate the cellular uptake of the APOE-containing lipoprotein particles. Finally, APOE also has a heparin-binding activity and binds heparan-sulfate proteoglycans on the surface of cells, a property that supports the capture and the receptor-mediated uptake of APOE-containing lipoproteins by cells.</text>
</comment>
<comment type="subunit">
    <text evidence="1">Homotetramer. May interact with ABCA1; functionally associated with ABCA1 in the biogenesis of HDLs. May interact with APP/A4 amyloid-beta peptide; the interaction is extremely stable in vitro but its physiological significance is unclear. May interact with MAPT. May interact with MAP2. In the cerebrospinal fluid, interacts with secreted SORL1. Interacts with PMEL; this allows the loading of PMEL luminal fragment on ILVs to induce fibril nucleation.</text>
</comment>
<comment type="subcellular location">
    <subcellularLocation>
        <location evidence="1">Secreted</location>
    </subcellularLocation>
    <subcellularLocation>
        <location evidence="1">Secreted</location>
        <location evidence="1">Extracellular space</location>
    </subcellularLocation>
    <subcellularLocation>
        <location evidence="1">Secreted</location>
        <location evidence="1">Extracellular space</location>
        <location evidence="1">Extracellular matrix</location>
    </subcellularLocation>
    <subcellularLocation>
        <location evidence="1">Extracellular vesicle</location>
    </subcellularLocation>
    <subcellularLocation>
        <location evidence="1">Endosome</location>
        <location evidence="1">Multivesicular body</location>
    </subcellularLocation>
    <text evidence="1">In the plasma, APOE is associated with chylomicrons, chylomicrons remnants, VLDL, LDL and HDL lipoproteins. Lipid poor oligomeric APOE is associated with the extracellular matrix in a calcium- and heparan-sulfate proteoglycans-dependent manner. Lipidation induces the release from the extracellular matrix. Colocalizes with CD63 and PMEL at exosomes and in intraluminal vesicles within multivesicular endosomes.</text>
</comment>
<comment type="PTM">
    <text evidence="1">APOE exists as multiple glycosylated and sialylated glycoforms within cells and in plasma. The extent of glycosylation and sialylation are tissue and context specific.</text>
</comment>
<comment type="PTM">
    <text evidence="1">Glycated in plasma VLDL.</text>
</comment>
<comment type="PTM">
    <text evidence="1">Phosphorylated by FAM20C in the extracellular medium.</text>
</comment>
<comment type="similarity">
    <text evidence="4">Belongs to the apolipoprotein A1/A4/E family.</text>
</comment>
<organism>
    <name type="scientific">Sus scrofa</name>
    <name type="common">Pig</name>
    <dbReference type="NCBI Taxonomy" id="9823"/>
    <lineage>
        <taxon>Eukaryota</taxon>
        <taxon>Metazoa</taxon>
        <taxon>Chordata</taxon>
        <taxon>Craniata</taxon>
        <taxon>Vertebrata</taxon>
        <taxon>Euteleostomi</taxon>
        <taxon>Mammalia</taxon>
        <taxon>Eutheria</taxon>
        <taxon>Laurasiatheria</taxon>
        <taxon>Artiodactyla</taxon>
        <taxon>Suina</taxon>
        <taxon>Suidae</taxon>
        <taxon>Sus</taxon>
    </lineage>
</organism>
<dbReference type="EMBL" id="X72835">
    <property type="protein sequence ID" value="CAA51356.1"/>
    <property type="molecule type" value="mRNA"/>
</dbReference>
<dbReference type="EMBL" id="U70240">
    <property type="protein sequence ID" value="AAC29512.1"/>
    <property type="molecule type" value="Genomic_DNA"/>
</dbReference>
<dbReference type="PIR" id="S33450">
    <property type="entry name" value="S33450"/>
</dbReference>
<dbReference type="RefSeq" id="NP_999473.1">
    <property type="nucleotide sequence ID" value="NM_214308.1"/>
</dbReference>
<dbReference type="SMR" id="P18650"/>
<dbReference type="FunCoup" id="P18650">
    <property type="interactions" value="537"/>
</dbReference>
<dbReference type="STRING" id="9823.ENSSSCP00000003343"/>
<dbReference type="PaxDb" id="9823-ENSSSCP00000003343"/>
<dbReference type="PeptideAtlas" id="P18650"/>
<dbReference type="GeneID" id="397576"/>
<dbReference type="KEGG" id="ssc:397576"/>
<dbReference type="CTD" id="348"/>
<dbReference type="eggNOG" id="ENOG502QVD6">
    <property type="taxonomic scope" value="Eukaryota"/>
</dbReference>
<dbReference type="InParanoid" id="P18650"/>
<dbReference type="OrthoDB" id="9048614at2759"/>
<dbReference type="Proteomes" id="UP000008227">
    <property type="component" value="Unplaced"/>
</dbReference>
<dbReference type="Proteomes" id="UP000314985">
    <property type="component" value="Unplaced"/>
</dbReference>
<dbReference type="Proteomes" id="UP000694570">
    <property type="component" value="Unplaced"/>
</dbReference>
<dbReference type="Proteomes" id="UP000694571">
    <property type="component" value="Unplaced"/>
</dbReference>
<dbReference type="Proteomes" id="UP000694720">
    <property type="component" value="Unplaced"/>
</dbReference>
<dbReference type="Proteomes" id="UP000694722">
    <property type="component" value="Unplaced"/>
</dbReference>
<dbReference type="Proteomes" id="UP000694723">
    <property type="component" value="Unplaced"/>
</dbReference>
<dbReference type="Proteomes" id="UP000694724">
    <property type="component" value="Unplaced"/>
</dbReference>
<dbReference type="Proteomes" id="UP000694725">
    <property type="component" value="Unplaced"/>
</dbReference>
<dbReference type="Proteomes" id="UP000694726">
    <property type="component" value="Unplaced"/>
</dbReference>
<dbReference type="Proteomes" id="UP000694727">
    <property type="component" value="Unplaced"/>
</dbReference>
<dbReference type="Proteomes" id="UP000694728">
    <property type="component" value="Unplaced"/>
</dbReference>
<dbReference type="GO" id="GO:0042627">
    <property type="term" value="C:chylomicron"/>
    <property type="evidence" value="ECO:0000318"/>
    <property type="project" value="GO_Central"/>
</dbReference>
<dbReference type="GO" id="GO:0070062">
    <property type="term" value="C:extracellular exosome"/>
    <property type="evidence" value="ECO:0000250"/>
    <property type="project" value="UniProtKB"/>
</dbReference>
<dbReference type="GO" id="GO:0031012">
    <property type="term" value="C:extracellular matrix"/>
    <property type="evidence" value="ECO:0000250"/>
    <property type="project" value="UniProtKB"/>
</dbReference>
<dbReference type="GO" id="GO:0005615">
    <property type="term" value="C:extracellular space"/>
    <property type="evidence" value="ECO:0000250"/>
    <property type="project" value="UniProtKB"/>
</dbReference>
<dbReference type="GO" id="GO:1903561">
    <property type="term" value="C:extracellular vesicle"/>
    <property type="evidence" value="ECO:0000318"/>
    <property type="project" value="GO_Central"/>
</dbReference>
<dbReference type="GO" id="GO:0034364">
    <property type="term" value="C:high-density lipoprotein particle"/>
    <property type="evidence" value="ECO:0000250"/>
    <property type="project" value="UniProtKB"/>
</dbReference>
<dbReference type="GO" id="GO:0034363">
    <property type="term" value="C:intermediate-density lipoprotein particle"/>
    <property type="evidence" value="ECO:0000250"/>
    <property type="project" value="UniProtKB"/>
</dbReference>
<dbReference type="GO" id="GO:0034362">
    <property type="term" value="C:low-density lipoprotein particle"/>
    <property type="evidence" value="ECO:0000250"/>
    <property type="project" value="UniProtKB"/>
</dbReference>
<dbReference type="GO" id="GO:0097487">
    <property type="term" value="C:multivesicular body, internal vesicle"/>
    <property type="evidence" value="ECO:0000250"/>
    <property type="project" value="UniProtKB"/>
</dbReference>
<dbReference type="GO" id="GO:0034361">
    <property type="term" value="C:very-low-density lipoprotein particle"/>
    <property type="evidence" value="ECO:0000250"/>
    <property type="project" value="UniProtKB"/>
</dbReference>
<dbReference type="GO" id="GO:0001540">
    <property type="term" value="F:amyloid-beta binding"/>
    <property type="evidence" value="ECO:0000250"/>
    <property type="project" value="UniProtKB"/>
</dbReference>
<dbReference type="GO" id="GO:0120020">
    <property type="term" value="F:cholesterol transfer activity"/>
    <property type="evidence" value="ECO:0000318"/>
    <property type="project" value="GO_Central"/>
</dbReference>
<dbReference type="GO" id="GO:0043395">
    <property type="term" value="F:heparan sulfate proteoglycan binding"/>
    <property type="evidence" value="ECO:0000250"/>
    <property type="project" value="UniProtKB"/>
</dbReference>
<dbReference type="GO" id="GO:0008201">
    <property type="term" value="F:heparin binding"/>
    <property type="evidence" value="ECO:0000250"/>
    <property type="project" value="UniProtKB"/>
</dbReference>
<dbReference type="GO" id="GO:0042802">
    <property type="term" value="F:identical protein binding"/>
    <property type="evidence" value="ECO:0000250"/>
    <property type="project" value="UniProtKB"/>
</dbReference>
<dbReference type="GO" id="GO:0050750">
    <property type="term" value="F:low-density lipoprotein particle receptor binding"/>
    <property type="evidence" value="ECO:0000250"/>
    <property type="project" value="UniProtKB"/>
</dbReference>
<dbReference type="GO" id="GO:0060228">
    <property type="term" value="F:phosphatidylcholine-sterol O-acyltransferase activator activity"/>
    <property type="evidence" value="ECO:0000318"/>
    <property type="project" value="GO_Central"/>
</dbReference>
<dbReference type="GO" id="GO:0005543">
    <property type="term" value="F:phospholipid binding"/>
    <property type="evidence" value="ECO:0000318"/>
    <property type="project" value="GO_Central"/>
</dbReference>
<dbReference type="GO" id="GO:0055090">
    <property type="term" value="P:acylglycerol homeostasis"/>
    <property type="evidence" value="ECO:0000318"/>
    <property type="project" value="GO_Central"/>
</dbReference>
<dbReference type="GO" id="GO:0033344">
    <property type="term" value="P:cholesterol efflux"/>
    <property type="evidence" value="ECO:0000250"/>
    <property type="project" value="UniProtKB"/>
</dbReference>
<dbReference type="GO" id="GO:0008203">
    <property type="term" value="P:cholesterol metabolic process"/>
    <property type="evidence" value="ECO:0000318"/>
    <property type="project" value="GO_Central"/>
</dbReference>
<dbReference type="GO" id="GO:0034382">
    <property type="term" value="P:chylomicron remnant clearance"/>
    <property type="evidence" value="ECO:0000250"/>
    <property type="project" value="UniProtKB"/>
</dbReference>
<dbReference type="GO" id="GO:0034380">
    <property type="term" value="P:high-density lipoprotein particle assembly"/>
    <property type="evidence" value="ECO:0000250"/>
    <property type="project" value="UniProtKB"/>
</dbReference>
<dbReference type="GO" id="GO:0071831">
    <property type="term" value="P:intermediate-density lipoprotein particle clearance"/>
    <property type="evidence" value="ECO:0000250"/>
    <property type="project" value="UniProtKB"/>
</dbReference>
<dbReference type="GO" id="GO:0042158">
    <property type="term" value="P:lipoprotein biosynthetic process"/>
    <property type="evidence" value="ECO:0000250"/>
    <property type="project" value="UniProtKB"/>
</dbReference>
<dbReference type="GO" id="GO:0032438">
    <property type="term" value="P:melanosome organization"/>
    <property type="evidence" value="ECO:0000250"/>
    <property type="project" value="UniProtKB"/>
</dbReference>
<dbReference type="GO" id="GO:1905907">
    <property type="term" value="P:negative regulation of amyloid fibril formation"/>
    <property type="evidence" value="ECO:0000250"/>
    <property type="project" value="UniProtKB"/>
</dbReference>
<dbReference type="GO" id="GO:0033700">
    <property type="term" value="P:phospholipid efflux"/>
    <property type="evidence" value="ECO:0000318"/>
    <property type="project" value="GO_Central"/>
</dbReference>
<dbReference type="GO" id="GO:1900223">
    <property type="term" value="P:positive regulation of amyloid-beta clearance"/>
    <property type="evidence" value="ECO:0000250"/>
    <property type="project" value="UniProtKB"/>
</dbReference>
<dbReference type="GO" id="GO:0071830">
    <property type="term" value="P:triglyceride-rich lipoprotein particle clearance"/>
    <property type="evidence" value="ECO:0000250"/>
    <property type="project" value="UniProtKB"/>
</dbReference>
<dbReference type="GO" id="GO:0034447">
    <property type="term" value="P:very-low-density lipoprotein particle clearance"/>
    <property type="evidence" value="ECO:0000250"/>
    <property type="project" value="UniProtKB"/>
</dbReference>
<dbReference type="FunFam" id="1.20.120.20:FF:000002">
    <property type="entry name" value="Apolipoprotein E"/>
    <property type="match status" value="1"/>
</dbReference>
<dbReference type="FunFam" id="1.20.120.20:FF:000003">
    <property type="entry name" value="Apolipoprotein E"/>
    <property type="match status" value="1"/>
</dbReference>
<dbReference type="Gene3D" id="1.20.120.20">
    <property type="entry name" value="Apolipoprotein"/>
    <property type="match status" value="2"/>
</dbReference>
<dbReference type="InterPro" id="IPR000074">
    <property type="entry name" value="ApoA_E"/>
</dbReference>
<dbReference type="InterPro" id="IPR050163">
    <property type="entry name" value="Apolipoprotein_A1/A4/E"/>
</dbReference>
<dbReference type="PANTHER" id="PTHR18976">
    <property type="entry name" value="APOLIPOPROTEIN"/>
    <property type="match status" value="1"/>
</dbReference>
<dbReference type="PANTHER" id="PTHR18976:SF2">
    <property type="entry name" value="APOLIPOPROTEIN E"/>
    <property type="match status" value="1"/>
</dbReference>
<dbReference type="Pfam" id="PF01442">
    <property type="entry name" value="Apolipoprotein"/>
    <property type="match status" value="1"/>
</dbReference>
<dbReference type="SUPFAM" id="SSF58113">
    <property type="entry name" value="Apolipoprotein A-I"/>
    <property type="match status" value="1"/>
</dbReference>
<protein>
    <recommendedName>
        <fullName>Apolipoprotein E</fullName>
        <shortName>Apo-E</shortName>
    </recommendedName>
</protein>
<feature type="signal peptide" evidence="3">
    <location>
        <begin position="1"/>
        <end position="18"/>
    </location>
</feature>
<feature type="chain" id="PRO_0000001993" description="Apolipoprotein E">
    <location>
        <begin position="19"/>
        <end position="317"/>
    </location>
</feature>
<feature type="repeat" description="1">
    <location>
        <begin position="79"/>
        <end position="100"/>
    </location>
</feature>
<feature type="repeat" description="2">
    <location>
        <begin position="101"/>
        <end position="122"/>
    </location>
</feature>
<feature type="repeat" description="3">
    <location>
        <begin position="123"/>
        <end position="144"/>
    </location>
</feature>
<feature type="repeat" description="4">
    <location>
        <begin position="145"/>
        <end position="166"/>
    </location>
</feature>
<feature type="repeat" description="5">
    <location>
        <begin position="167"/>
        <end position="188"/>
    </location>
</feature>
<feature type="repeat" description="6">
    <location>
        <begin position="189"/>
        <end position="210"/>
    </location>
</feature>
<feature type="repeat" description="7">
    <location>
        <begin position="211"/>
        <end position="232"/>
    </location>
</feature>
<feature type="repeat" description="8">
    <location>
        <begin position="233"/>
        <end position="254"/>
    </location>
</feature>
<feature type="region of interest" description="8 X 22 AA approximate tandem repeats">
    <location>
        <begin position="79"/>
        <end position="254"/>
    </location>
</feature>
<feature type="region of interest" description="LDL and other lipoprotein receptors binding" evidence="1">
    <location>
        <begin position="157"/>
        <end position="167"/>
    </location>
</feature>
<feature type="region of interest" description="Lipid-binding and lipoprotein association" evidence="1">
    <location>
        <begin position="209"/>
        <end position="289"/>
    </location>
</feature>
<feature type="region of interest" description="Homooligomerization" evidence="1">
    <location>
        <begin position="265"/>
        <end position="317"/>
    </location>
</feature>
<feature type="region of interest" description="Specificity for association with VLDL" evidence="1">
    <location>
        <begin position="277"/>
        <end position="289"/>
    </location>
</feature>
<feature type="binding site" evidence="1">
    <location>
        <begin position="161"/>
        <end position="164"/>
    </location>
    <ligand>
        <name>heparin</name>
        <dbReference type="ChEBI" id="CHEBI:28304"/>
    </ligand>
</feature>
<feature type="binding site" evidence="1">
    <location>
        <begin position="228"/>
        <end position="235"/>
    </location>
    <ligand>
        <name>heparin</name>
        <dbReference type="ChEBI" id="CHEBI:28304"/>
    </ligand>
</feature>
<feature type="modified residue" description="Methionine sulfoxide" evidence="2">
    <location>
        <position position="142"/>
    </location>
</feature>
<feature type="sequence conflict" description="In Ref. 2; AAC29512." evidence="4" ref="2">
    <original>S</original>
    <variation>P</variation>
    <location>
        <position position="35"/>
    </location>
</feature>
<feature type="sequence conflict" description="In Ref. 2; AAC29512." evidence="4" ref="2">
    <original>NV</original>
    <variation>KL</variation>
    <location>
        <begin position="160"/>
        <end position="161"/>
    </location>
</feature>
<feature type="sequence conflict" description="In Ref. 2; AAC29512." evidence="4" ref="2">
    <original>V</original>
    <variation>L</variation>
    <location>
        <position position="166"/>
    </location>
</feature>
<feature type="sequence conflict" description="In Ref. 2; AAC29512." evidence="4" ref="2">
    <original>DE</original>
    <variation>EQ</variation>
    <location>
        <begin position="251"/>
        <end position="252"/>
    </location>
</feature>
<feature type="sequence conflict" description="In Ref. 2; AAC29512." evidence="4" ref="2">
    <original>A</original>
    <variation>G</variation>
    <location>
        <position position="273"/>
    </location>
</feature>
<feature type="sequence conflict" description="In Ref. 2; AAC29512." evidence="4" ref="2">
    <original>Q</original>
    <variation>H</variation>
    <location>
        <position position="275"/>
    </location>
</feature>
<feature type="sequence conflict" description="In Ref. 2; AAC29512." evidence="4" ref="2">
    <original>R</original>
    <variation>L</variation>
    <location>
        <position position="277"/>
    </location>
</feature>
<feature type="sequence conflict" description="In Ref. 2; AAC29512." evidence="4" ref="2">
    <original>M</original>
    <variation>I</variation>
    <location>
        <position position="289"/>
    </location>
</feature>
<feature type="sequence conflict" description="In Ref. 2; AAC29512." evidence="4" ref="2">
    <original>A</original>
    <variation>G</variation>
    <location>
        <position position="303"/>
    </location>
</feature>
<reference key="1">
    <citation type="submission" date="1993-05" db="EMBL/GenBank/DDBJ databases">
        <authorList>
            <person name="Brzozowska A.M."/>
            <person name="Grimholt U."/>
            <person name="Kulseth M.A."/>
            <person name="Wold I."/>
            <person name="Rogne S."/>
        </authorList>
    </citation>
    <scope>NUCLEOTIDE SEQUENCE</scope>
    <source>
        <tissue>Liver</tissue>
    </source>
</reference>
<reference key="2">
    <citation type="journal article" date="1998" name="Anim. Genet.">
        <title>Isolation and genetic characterization of the porcine apolipoprotein E gene.</title>
        <authorList>
            <person name="Ramsoondar J.J."/>
            <person name="Rucker E.B."/>
            <person name="Vasquez J.C."/>
            <person name="Gallagher D.S. Jr."/>
            <person name="Grimm D.R."/>
            <person name="Lunney J.K."/>
            <person name="Schook L.B."/>
            <person name="Piedrahita J.A."/>
        </authorList>
    </citation>
    <scope>NUCLEOTIDE SEQUENCE [GENOMIC DNA]</scope>
</reference>
<reference key="3">
    <citation type="journal article" date="1980" name="Biochem. Biophys. Res. Commun.">
        <title>Comparison of the human, canine and swine E apoproteins.</title>
        <authorList>
            <person name="Weisgraber K.H."/>
            <person name="Troxler R.F."/>
            <person name="Rall S.C."/>
            <person name="Mahley R.W."/>
        </authorList>
    </citation>
    <scope>PRELIMINARY PROTEIN SEQUENCE OF 19-31</scope>
</reference>
<name>APOE_PIG</name>
<keyword id="KW-0162">Chylomicron</keyword>
<keyword id="KW-0903">Direct protein sequencing</keyword>
<keyword id="KW-0967">Endosome</keyword>
<keyword id="KW-0272">Extracellular matrix</keyword>
<keyword id="KW-0325">Glycoprotein</keyword>
<keyword id="KW-0345">HDL</keyword>
<keyword id="KW-0358">Heparin-binding</keyword>
<keyword id="KW-0445">Lipid transport</keyword>
<keyword id="KW-0446">Lipid-binding</keyword>
<keyword id="KW-0558">Oxidation</keyword>
<keyword id="KW-1185">Reference proteome</keyword>
<keyword id="KW-0677">Repeat</keyword>
<keyword id="KW-0964">Secreted</keyword>
<keyword id="KW-0732">Signal</keyword>
<keyword id="KW-0813">Transport</keyword>
<keyword id="KW-0850">VLDL</keyword>